<evidence type="ECO:0000255" key="1">
    <source>
        <dbReference type="HAMAP-Rule" id="MF_00636"/>
    </source>
</evidence>
<protein>
    <recommendedName>
        <fullName evidence="1">Nucleotide-binding protein LBUL_0556</fullName>
    </recommendedName>
</protein>
<name>Y556_LACDB</name>
<gene>
    <name type="ordered locus">LBUL_0556</name>
</gene>
<reference key="1">
    <citation type="journal article" date="2006" name="Proc. Natl. Acad. Sci. U.S.A.">
        <title>Comparative genomics of the lactic acid bacteria.</title>
        <authorList>
            <person name="Makarova K.S."/>
            <person name="Slesarev A."/>
            <person name="Wolf Y.I."/>
            <person name="Sorokin A."/>
            <person name="Mirkin B."/>
            <person name="Koonin E.V."/>
            <person name="Pavlov A."/>
            <person name="Pavlova N."/>
            <person name="Karamychev V."/>
            <person name="Polouchine N."/>
            <person name="Shakhova V."/>
            <person name="Grigoriev I."/>
            <person name="Lou Y."/>
            <person name="Rohksar D."/>
            <person name="Lucas S."/>
            <person name="Huang K."/>
            <person name="Goodstein D.M."/>
            <person name="Hawkins T."/>
            <person name="Plengvidhya V."/>
            <person name="Welker D."/>
            <person name="Hughes J."/>
            <person name="Goh Y."/>
            <person name="Benson A."/>
            <person name="Baldwin K."/>
            <person name="Lee J.-H."/>
            <person name="Diaz-Muniz I."/>
            <person name="Dosti B."/>
            <person name="Smeianov V."/>
            <person name="Wechter W."/>
            <person name="Barabote R."/>
            <person name="Lorca G."/>
            <person name="Altermann E."/>
            <person name="Barrangou R."/>
            <person name="Ganesan B."/>
            <person name="Xie Y."/>
            <person name="Rawsthorne H."/>
            <person name="Tamir D."/>
            <person name="Parker C."/>
            <person name="Breidt F."/>
            <person name="Broadbent J.R."/>
            <person name="Hutkins R."/>
            <person name="O'Sullivan D."/>
            <person name="Steele J."/>
            <person name="Unlu G."/>
            <person name="Saier M.H. Jr."/>
            <person name="Klaenhammer T."/>
            <person name="Richardson P."/>
            <person name="Kozyavkin S."/>
            <person name="Weimer B.C."/>
            <person name="Mills D.A."/>
        </authorList>
    </citation>
    <scope>NUCLEOTIDE SEQUENCE [LARGE SCALE GENOMIC DNA]</scope>
    <source>
        <strain>ATCC BAA-365 / Lb-18</strain>
    </source>
</reference>
<keyword id="KW-0067">ATP-binding</keyword>
<keyword id="KW-0342">GTP-binding</keyword>
<keyword id="KW-0547">Nucleotide-binding</keyword>
<sequence length="292" mass="33407">MHEKYKKQLLILTGMSGAGKTVAAHSLEDVGYFVVDNLPPELLGNFWDLMNTSEDFEKVAVVIDLRVKSFYKDLIDEINSLEDSGQTQATIVFLEASDDTLVARYKETRRLPPLAENGRLLDGIRDERRILTPVRNRSNYILDTSKMTTKELKQKLQSKFGELHKPKFGIEVMSFGFKYGMPIDADIVMDVRFLPNPFYIPELRPFTGLDKRVFNYVMDKDETKVFYGKLLDLLLTAIPGYIDEGKEKLTIAIGCTGGQHRSVSIAQQLARDLSEKYPVDITHREISRYLRK</sequence>
<comment type="function">
    <text evidence="1">Displays ATPase and GTPase activities.</text>
</comment>
<comment type="similarity">
    <text evidence="1">Belongs to the RapZ-like family.</text>
</comment>
<proteinExistence type="inferred from homology"/>
<accession>Q04BI0</accession>
<feature type="chain" id="PRO_1000056830" description="Nucleotide-binding protein LBUL_0556">
    <location>
        <begin position="1"/>
        <end position="292"/>
    </location>
</feature>
<feature type="binding site" evidence="1">
    <location>
        <begin position="14"/>
        <end position="21"/>
    </location>
    <ligand>
        <name>ATP</name>
        <dbReference type="ChEBI" id="CHEBI:30616"/>
    </ligand>
</feature>
<feature type="binding site" evidence="1">
    <location>
        <begin position="64"/>
        <end position="67"/>
    </location>
    <ligand>
        <name>GTP</name>
        <dbReference type="ChEBI" id="CHEBI:37565"/>
    </ligand>
</feature>
<dbReference type="EMBL" id="CP000412">
    <property type="protein sequence ID" value="ABJ58192.1"/>
    <property type="molecule type" value="Genomic_DNA"/>
</dbReference>
<dbReference type="SMR" id="Q04BI0"/>
<dbReference type="KEGG" id="lbu:LBUL_0556"/>
<dbReference type="HOGENOM" id="CLU_059558_0_0_9"/>
<dbReference type="BioCyc" id="LDEL321956:LBUL_RS02640-MONOMER"/>
<dbReference type="GO" id="GO:0005524">
    <property type="term" value="F:ATP binding"/>
    <property type="evidence" value="ECO:0007669"/>
    <property type="project" value="UniProtKB-UniRule"/>
</dbReference>
<dbReference type="GO" id="GO:0005525">
    <property type="term" value="F:GTP binding"/>
    <property type="evidence" value="ECO:0007669"/>
    <property type="project" value="UniProtKB-UniRule"/>
</dbReference>
<dbReference type="Gene3D" id="3.40.50.300">
    <property type="entry name" value="P-loop containing nucleotide triphosphate hydrolases"/>
    <property type="match status" value="1"/>
</dbReference>
<dbReference type="HAMAP" id="MF_00636">
    <property type="entry name" value="RapZ_like"/>
    <property type="match status" value="1"/>
</dbReference>
<dbReference type="InterPro" id="IPR027417">
    <property type="entry name" value="P-loop_NTPase"/>
</dbReference>
<dbReference type="InterPro" id="IPR005337">
    <property type="entry name" value="RapZ-like"/>
</dbReference>
<dbReference type="InterPro" id="IPR053930">
    <property type="entry name" value="RapZ-like_N"/>
</dbReference>
<dbReference type="InterPro" id="IPR053931">
    <property type="entry name" value="RapZ_C"/>
</dbReference>
<dbReference type="NCBIfam" id="NF003828">
    <property type="entry name" value="PRK05416.1"/>
    <property type="match status" value="1"/>
</dbReference>
<dbReference type="PANTHER" id="PTHR30448">
    <property type="entry name" value="RNASE ADAPTER PROTEIN RAPZ"/>
    <property type="match status" value="1"/>
</dbReference>
<dbReference type="PANTHER" id="PTHR30448:SF0">
    <property type="entry name" value="RNASE ADAPTER PROTEIN RAPZ"/>
    <property type="match status" value="1"/>
</dbReference>
<dbReference type="Pfam" id="PF22740">
    <property type="entry name" value="PapZ_C"/>
    <property type="match status" value="1"/>
</dbReference>
<dbReference type="Pfam" id="PF03668">
    <property type="entry name" value="RapZ-like_N"/>
    <property type="match status" value="1"/>
</dbReference>
<dbReference type="PIRSF" id="PIRSF005052">
    <property type="entry name" value="P-loopkin"/>
    <property type="match status" value="1"/>
</dbReference>
<dbReference type="SUPFAM" id="SSF52540">
    <property type="entry name" value="P-loop containing nucleoside triphosphate hydrolases"/>
    <property type="match status" value="1"/>
</dbReference>
<organism>
    <name type="scientific">Lactobacillus delbrueckii subsp. bulgaricus (strain ATCC BAA-365 / Lb-18)</name>
    <dbReference type="NCBI Taxonomy" id="321956"/>
    <lineage>
        <taxon>Bacteria</taxon>
        <taxon>Bacillati</taxon>
        <taxon>Bacillota</taxon>
        <taxon>Bacilli</taxon>
        <taxon>Lactobacillales</taxon>
        <taxon>Lactobacillaceae</taxon>
        <taxon>Lactobacillus</taxon>
    </lineage>
</organism>